<reference key="1">
    <citation type="journal article" date="2004" name="Gene">
        <title>Emergence of talanin protein associated with human uric acid nephrolithiasis in the hominidae lineage.</title>
        <authorList>
            <person name="Gianfrancesco F."/>
            <person name="Esposito T."/>
            <person name="Casu G."/>
            <person name="Maninchedda G."/>
            <person name="Roberto R."/>
            <person name="Parastu M."/>
        </authorList>
    </citation>
    <scope>NUCLEOTIDE SEQUENCE [MRNA] (ISOFORM 1)</scope>
    <scope>TISSUE SPECIFICITY</scope>
    <source>
        <strain>C57BL/6J</strain>
        <tissue>Retina</tissue>
    </source>
</reference>
<reference key="2">
    <citation type="journal article" date="2006" name="Proc. Natl. Acad. Sci. U.S.A.">
        <title>Characterization of Su48, a centrosome protein essential for cell division.</title>
        <authorList>
            <person name="Wang Q."/>
            <person name="Du X."/>
            <person name="Meinkoth J."/>
            <person name="Hirohashi Y."/>
            <person name="Zhang H."/>
            <person name="Liu Q."/>
            <person name="Richter M."/>
            <person name="Greene M.I."/>
        </authorList>
    </citation>
    <scope>NUCLEOTIDE SEQUENCE [MRNA] (ISOFORM 1)</scope>
    <scope>TISSUE SPECIFICITY</scope>
</reference>
<reference key="3">
    <citation type="journal article" date="2003" name="DNA Res.">
        <title>Prediction of the coding sequences of mouse homologues of KIAA gene: II. The complete nucleotide sequences of 400 mouse KIAA-homologous cDNAs identified by screening of terminal sequences of cDNA clones randomly sampled from size-fractionated libraries.</title>
        <authorList>
            <person name="Okazaki N."/>
            <person name="Kikuno R."/>
            <person name="Ohara R."/>
            <person name="Inamoto S."/>
            <person name="Aizawa H."/>
            <person name="Yuasa S."/>
            <person name="Nakajima D."/>
            <person name="Nagase T."/>
            <person name="Ohara O."/>
            <person name="Koga H."/>
        </authorList>
    </citation>
    <scope>NUCLEOTIDE SEQUENCE [LARGE SCALE MRNA] (ISOFORM 1)</scope>
    <source>
        <tissue>Brain</tissue>
    </source>
</reference>
<reference key="4">
    <citation type="journal article" date="2005" name="Science">
        <title>The transcriptional landscape of the mammalian genome.</title>
        <authorList>
            <person name="Carninci P."/>
            <person name="Kasukawa T."/>
            <person name="Katayama S."/>
            <person name="Gough J."/>
            <person name="Frith M.C."/>
            <person name="Maeda N."/>
            <person name="Oyama R."/>
            <person name="Ravasi T."/>
            <person name="Lenhard B."/>
            <person name="Wells C."/>
            <person name="Kodzius R."/>
            <person name="Shimokawa K."/>
            <person name="Bajic V.B."/>
            <person name="Brenner S.E."/>
            <person name="Batalov S."/>
            <person name="Forrest A.R."/>
            <person name="Zavolan M."/>
            <person name="Davis M.J."/>
            <person name="Wilming L.G."/>
            <person name="Aidinis V."/>
            <person name="Allen J.E."/>
            <person name="Ambesi-Impiombato A."/>
            <person name="Apweiler R."/>
            <person name="Aturaliya R.N."/>
            <person name="Bailey T.L."/>
            <person name="Bansal M."/>
            <person name="Baxter L."/>
            <person name="Beisel K.W."/>
            <person name="Bersano T."/>
            <person name="Bono H."/>
            <person name="Chalk A.M."/>
            <person name="Chiu K.P."/>
            <person name="Choudhary V."/>
            <person name="Christoffels A."/>
            <person name="Clutterbuck D.R."/>
            <person name="Crowe M.L."/>
            <person name="Dalla E."/>
            <person name="Dalrymple B.P."/>
            <person name="de Bono B."/>
            <person name="Della Gatta G."/>
            <person name="di Bernardo D."/>
            <person name="Down T."/>
            <person name="Engstrom P."/>
            <person name="Fagiolini M."/>
            <person name="Faulkner G."/>
            <person name="Fletcher C.F."/>
            <person name="Fukushima T."/>
            <person name="Furuno M."/>
            <person name="Futaki S."/>
            <person name="Gariboldi M."/>
            <person name="Georgii-Hemming P."/>
            <person name="Gingeras T.R."/>
            <person name="Gojobori T."/>
            <person name="Green R.E."/>
            <person name="Gustincich S."/>
            <person name="Harbers M."/>
            <person name="Hayashi Y."/>
            <person name="Hensch T.K."/>
            <person name="Hirokawa N."/>
            <person name="Hill D."/>
            <person name="Huminiecki L."/>
            <person name="Iacono M."/>
            <person name="Ikeo K."/>
            <person name="Iwama A."/>
            <person name="Ishikawa T."/>
            <person name="Jakt M."/>
            <person name="Kanapin A."/>
            <person name="Katoh M."/>
            <person name="Kawasawa Y."/>
            <person name="Kelso J."/>
            <person name="Kitamura H."/>
            <person name="Kitano H."/>
            <person name="Kollias G."/>
            <person name="Krishnan S.P."/>
            <person name="Kruger A."/>
            <person name="Kummerfeld S.K."/>
            <person name="Kurochkin I.V."/>
            <person name="Lareau L.F."/>
            <person name="Lazarevic D."/>
            <person name="Lipovich L."/>
            <person name="Liu J."/>
            <person name="Liuni S."/>
            <person name="McWilliam S."/>
            <person name="Madan Babu M."/>
            <person name="Madera M."/>
            <person name="Marchionni L."/>
            <person name="Matsuda H."/>
            <person name="Matsuzawa S."/>
            <person name="Miki H."/>
            <person name="Mignone F."/>
            <person name="Miyake S."/>
            <person name="Morris K."/>
            <person name="Mottagui-Tabar S."/>
            <person name="Mulder N."/>
            <person name="Nakano N."/>
            <person name="Nakauchi H."/>
            <person name="Ng P."/>
            <person name="Nilsson R."/>
            <person name="Nishiguchi S."/>
            <person name="Nishikawa S."/>
            <person name="Nori F."/>
            <person name="Ohara O."/>
            <person name="Okazaki Y."/>
            <person name="Orlando V."/>
            <person name="Pang K.C."/>
            <person name="Pavan W.J."/>
            <person name="Pavesi G."/>
            <person name="Pesole G."/>
            <person name="Petrovsky N."/>
            <person name="Piazza S."/>
            <person name="Reed J."/>
            <person name="Reid J.F."/>
            <person name="Ring B.Z."/>
            <person name="Ringwald M."/>
            <person name="Rost B."/>
            <person name="Ruan Y."/>
            <person name="Salzberg S.L."/>
            <person name="Sandelin A."/>
            <person name="Schneider C."/>
            <person name="Schoenbach C."/>
            <person name="Sekiguchi K."/>
            <person name="Semple C.A."/>
            <person name="Seno S."/>
            <person name="Sessa L."/>
            <person name="Sheng Y."/>
            <person name="Shibata Y."/>
            <person name="Shimada H."/>
            <person name="Shimada K."/>
            <person name="Silva D."/>
            <person name="Sinclair B."/>
            <person name="Sperling S."/>
            <person name="Stupka E."/>
            <person name="Sugiura K."/>
            <person name="Sultana R."/>
            <person name="Takenaka Y."/>
            <person name="Taki K."/>
            <person name="Tammoja K."/>
            <person name="Tan S.L."/>
            <person name="Tang S."/>
            <person name="Taylor M.S."/>
            <person name="Tegner J."/>
            <person name="Teichmann S.A."/>
            <person name="Ueda H.R."/>
            <person name="van Nimwegen E."/>
            <person name="Verardo R."/>
            <person name="Wei C.L."/>
            <person name="Yagi K."/>
            <person name="Yamanishi H."/>
            <person name="Zabarovsky E."/>
            <person name="Zhu S."/>
            <person name="Zimmer A."/>
            <person name="Hide W."/>
            <person name="Bult C."/>
            <person name="Grimmond S.M."/>
            <person name="Teasdale R.D."/>
            <person name="Liu E.T."/>
            <person name="Brusic V."/>
            <person name="Quackenbush J."/>
            <person name="Wahlestedt C."/>
            <person name="Mattick J.S."/>
            <person name="Hume D.A."/>
            <person name="Kai C."/>
            <person name="Sasaki D."/>
            <person name="Tomaru Y."/>
            <person name="Fukuda S."/>
            <person name="Kanamori-Katayama M."/>
            <person name="Suzuki M."/>
            <person name="Aoki J."/>
            <person name="Arakawa T."/>
            <person name="Iida J."/>
            <person name="Imamura K."/>
            <person name="Itoh M."/>
            <person name="Kato T."/>
            <person name="Kawaji H."/>
            <person name="Kawagashira N."/>
            <person name="Kawashima T."/>
            <person name="Kojima M."/>
            <person name="Kondo S."/>
            <person name="Konno H."/>
            <person name="Nakano K."/>
            <person name="Ninomiya N."/>
            <person name="Nishio T."/>
            <person name="Okada M."/>
            <person name="Plessy C."/>
            <person name="Shibata K."/>
            <person name="Shiraki T."/>
            <person name="Suzuki S."/>
            <person name="Tagami M."/>
            <person name="Waki K."/>
            <person name="Watahiki A."/>
            <person name="Okamura-Oho Y."/>
            <person name="Suzuki H."/>
            <person name="Kawai J."/>
            <person name="Hayashizaki Y."/>
        </authorList>
    </citation>
    <scope>NUCLEOTIDE SEQUENCE [LARGE SCALE MRNA] (ISOFORMS 1 AND 2)</scope>
    <source>
        <strain>C57BL/6J</strain>
        <tissue>Diencephalon</tissue>
        <tissue>Medulla oblongata</tissue>
    </source>
</reference>
<reference key="5">
    <citation type="journal article" date="2004" name="Genome Res.">
        <title>The status, quality, and expansion of the NIH full-length cDNA project: the Mammalian Gene Collection (MGC).</title>
        <authorList>
            <consortium name="The MGC Project Team"/>
        </authorList>
    </citation>
    <scope>NUCLEOTIDE SEQUENCE [LARGE SCALE MRNA] (ISOFORM 1)</scope>
    <source>
        <strain>C57BL/6J</strain>
        <tissue>Brain</tissue>
    </source>
</reference>
<reference key="6">
    <citation type="journal article" date="2010" name="Cell">
        <title>A tissue-specific atlas of mouse protein phosphorylation and expression.</title>
        <authorList>
            <person name="Huttlin E.L."/>
            <person name="Jedrychowski M.P."/>
            <person name="Elias J.E."/>
            <person name="Goswami T."/>
            <person name="Rad R."/>
            <person name="Beausoleil S.A."/>
            <person name="Villen J."/>
            <person name="Haas W."/>
            <person name="Sowa M.E."/>
            <person name="Gygi S.P."/>
        </authorList>
    </citation>
    <scope>PHOSPHORYLATION [LARGE SCALE ANALYSIS] AT SER-16; SER-139; SER-146 AND THR-176</scope>
    <scope>IDENTIFICATION BY MASS SPECTROMETRY [LARGE SCALE ANALYSIS]</scope>
    <source>
        <tissue>Brain</tissue>
    </source>
</reference>
<reference key="7">
    <citation type="journal article" date="2013" name="Cancer Discov.">
        <title>ZNF365 promotes stability of fragile sites and telomeres.</title>
        <authorList>
            <person name="Zhang Y."/>
            <person name="Shin S.J."/>
            <person name="Liu D."/>
            <person name="Ivanova E."/>
            <person name="Foerster F."/>
            <person name="Ying H."/>
            <person name="Zheng H."/>
            <person name="Xiao Y."/>
            <person name="Chen Z."/>
            <person name="Protopopov A."/>
            <person name="Depinho R.A."/>
            <person name="Paik J.H."/>
        </authorList>
    </citation>
    <scope>FUNCTION</scope>
</reference>
<reference key="8">
    <citation type="journal article" date="2013" name="Cell Cycle">
        <title>ZNF365 promotes stalled replication forks recovery to maintain genome stability.</title>
        <authorList>
            <person name="Zhang Y."/>
            <person name="Park E."/>
            <person name="Kim C.S."/>
            <person name="Paik J.H."/>
        </authorList>
    </citation>
    <scope>INDUCTION BY GAMMA IRRADIATION</scope>
</reference>
<reference key="9">
    <citation type="journal article" date="2013" name="J. Chem. Neuroanat.">
        <title>DBZ (DISC1-binding zinc finger protein)-deficient mice display abnormalities in basket cells in the somatosensory cortices.</title>
        <authorList>
            <person name="Koyama Y."/>
            <person name="Hattori T."/>
            <person name="Shimizu S."/>
            <person name="Taniguchi M."/>
            <person name="Yamada K."/>
            <person name="Takamura H."/>
            <person name="Kumamoto N."/>
            <person name="Matsuzaki S."/>
            <person name="Ito A."/>
            <person name="Katayama T."/>
            <person name="Tohyama M."/>
        </authorList>
    </citation>
    <scope>FUNCTION</scope>
    <scope>TISSUE SPECIFICITY</scope>
    <scope>DEVELOPMENTAL STAGE</scope>
    <scope>DISRUPTION PHENOTYPE</scope>
</reference>
<reference key="10">
    <citation type="journal article" date="2014" name="Glia">
        <title>DBZ, a CNS-specific DISC1 binding protein, positively regulates oligodendrocyte differentiation.</title>
        <authorList>
            <person name="Shimizu S."/>
            <person name="Koyama Y."/>
            <person name="Hattori T."/>
            <person name="Tachibana T."/>
            <person name="Yoshimi T."/>
            <person name="Emoto H."/>
            <person name="Matsumoto Y."/>
            <person name="Miyata S."/>
            <person name="Katayama T."/>
            <person name="Ito A."/>
            <person name="Tohyama M."/>
        </authorList>
    </citation>
    <scope>FUNCTION</scope>
    <scope>DEVELOPMENTAL STAGE</scope>
    <scope>DISRUPTION PHENOTYPE</scope>
</reference>
<reference key="11">
    <citation type="journal article" date="2015" name="Front. Neuroanat.">
        <title>Alterations in dendrite and spine morphology of cortical pyramidal neurons in DISC1-binding zinc finger protein (DBZ) knockout mice.</title>
        <authorList>
            <person name="Koyama Y."/>
            <person name="Hattori T."/>
            <person name="Nishida T."/>
            <person name="Hori O."/>
            <person name="Tohyama M."/>
        </authorList>
    </citation>
    <scope>FUNCTION</scope>
    <scope>DISRUPTION PHENOTYPE</scope>
</reference>
<feature type="chain" id="PRO_0000076375" description="Protein ZNF365">
    <location>
        <begin position="1"/>
        <end position="408"/>
    </location>
</feature>
<feature type="zinc finger region" description="C2H2-type; degenerate" evidence="4">
    <location>
        <begin position="26"/>
        <end position="51"/>
    </location>
</feature>
<feature type="coiled-coil region" evidence="3">
    <location>
        <begin position="170"/>
        <end position="298"/>
    </location>
</feature>
<feature type="modified residue" description="Phosphoserine" evidence="15">
    <location>
        <position position="16"/>
    </location>
</feature>
<feature type="modified residue" description="Phosphoserine" evidence="15">
    <location>
        <position position="139"/>
    </location>
</feature>
<feature type="modified residue" description="Phosphoserine" evidence="15">
    <location>
        <position position="146"/>
    </location>
</feature>
<feature type="modified residue" description="Phosphothreonine" evidence="15">
    <location>
        <position position="176"/>
    </location>
</feature>
<feature type="modified residue" description="Phosphoserine" evidence="1">
    <location>
        <position position="370"/>
    </location>
</feature>
<feature type="splice variant" id="VSP_016601" description="In isoform 2." evidence="12">
    <original>LTDIPSNRKPRCLSRGHQHSVCN</original>
    <variation>VSPLPVSHPMAPPEYSQNEPRQS</variation>
    <location>
        <begin position="310"/>
        <end position="332"/>
    </location>
</feature>
<feature type="splice variant" id="VSP_016602" description="In isoform 2." evidence="12">
    <location>
        <begin position="333"/>
        <end position="408"/>
    </location>
</feature>
<feature type="sequence conflict" description="In Ref. 2; AAQ11828, 3; BAC65669 and 4; BAC31866." evidence="14" ref="2 3 4">
    <original>S</original>
    <variation>P</variation>
    <location>
        <position position="97"/>
    </location>
</feature>
<feature type="sequence conflict" description="In Ref. 3; BAC65669." evidence="14" ref="3">
    <location>
        <position position="309"/>
    </location>
</feature>
<feature type="sequence conflict" description="In Ref. 2; AAQ11828, 3; BAC65669 and 4; BAC31866." evidence="14" ref="2 3 4">
    <original>M</original>
    <variation>L</variation>
    <location>
        <position position="336"/>
    </location>
</feature>
<evidence type="ECO:0000250" key="1">
    <source>
        <dbReference type="UniProtKB" id="Q5PQS2"/>
    </source>
</evidence>
<evidence type="ECO:0000250" key="2">
    <source>
        <dbReference type="UniProtKB" id="Q70YC5"/>
    </source>
</evidence>
<evidence type="ECO:0000255" key="3"/>
<evidence type="ECO:0000255" key="4">
    <source>
        <dbReference type="PROSITE-ProRule" id="PRU00042"/>
    </source>
</evidence>
<evidence type="ECO:0000269" key="5">
    <source>
    </source>
</evidence>
<evidence type="ECO:0000269" key="6">
    <source>
    </source>
</evidence>
<evidence type="ECO:0000269" key="7">
    <source>
    </source>
</evidence>
<evidence type="ECO:0000269" key="8">
    <source>
    </source>
</evidence>
<evidence type="ECO:0000269" key="9">
    <source>
    </source>
</evidence>
<evidence type="ECO:0000269" key="10">
    <source>
    </source>
</evidence>
<evidence type="ECO:0000269" key="11">
    <source>
    </source>
</evidence>
<evidence type="ECO:0000303" key="12">
    <source>
    </source>
</evidence>
<evidence type="ECO:0000303" key="13">
    <source>
    </source>
</evidence>
<evidence type="ECO:0000305" key="14"/>
<evidence type="ECO:0007744" key="15">
    <source>
    </source>
</evidence>
<sequence>MQQTTFEESRYHWQDSLENVAVCLPFRCPRCGDHTRFRSLSSLRAHLEFSHSYEERTLLTKCSLLPSLKDTELLRSSELPKQGKVLRGHAKVTKQKSSYVNLYSISHGHSKDTKPFEMVAERPVSYVQTYTAVDIRADSLDAPCASPGLPTQDTKAAFEAHVREKFNRMVEAVDRTIEKRIDKLTKELAQKTAELLEVRAAFAQLTQKKQEVQRRERALNKQVDVAVEMIAVLKQRLTESEEELLRKEEEVVTFNHFLEAAAEKEVQGKARLQDFIENLLQRVELAEKQLEYYQSQQASGFSCDTSEHMLTDIPSNRKPRCLSRGHQHSVCNHPEMRAHFHLKGRSYLKKAKDERAGMQPAKAIHEPAESPREFFRPAKKGEHLGLSRKGNFRPKMAKKKPTAIVNII</sequence>
<name>ZN365_MOUSE</name>
<organism>
    <name type="scientific">Mus musculus</name>
    <name type="common">Mouse</name>
    <dbReference type="NCBI Taxonomy" id="10090"/>
    <lineage>
        <taxon>Eukaryota</taxon>
        <taxon>Metazoa</taxon>
        <taxon>Chordata</taxon>
        <taxon>Craniata</taxon>
        <taxon>Vertebrata</taxon>
        <taxon>Euteleostomi</taxon>
        <taxon>Mammalia</taxon>
        <taxon>Eutheria</taxon>
        <taxon>Euarchontoglires</taxon>
        <taxon>Glires</taxon>
        <taxon>Rodentia</taxon>
        <taxon>Myomorpha</taxon>
        <taxon>Muroidea</taxon>
        <taxon>Muridae</taxon>
        <taxon>Murinae</taxon>
        <taxon>Mus</taxon>
        <taxon>Mus</taxon>
    </lineage>
</organism>
<protein>
    <recommendedName>
        <fullName>Protein ZNF365</fullName>
    </recommendedName>
    <alternativeName>
        <fullName evidence="13">DISC1-binding zinc-finger protein</fullName>
    </alternativeName>
    <alternativeName>
        <fullName>Su48</fullName>
    </alternativeName>
</protein>
<gene>
    <name type="primary">Znf365</name>
    <name evidence="13" type="synonym">Dbz</name>
    <name type="synonym">Kiaa0844</name>
    <name type="synonym">Zfp365</name>
</gene>
<dbReference type="EMBL" id="AJ516033">
    <property type="protein sequence ID" value="CAD56774.1"/>
    <property type="molecule type" value="mRNA"/>
</dbReference>
<dbReference type="EMBL" id="AF543761">
    <property type="protein sequence ID" value="AAQ11828.1"/>
    <property type="molecule type" value="mRNA"/>
</dbReference>
<dbReference type="EMBL" id="AK122387">
    <property type="protein sequence ID" value="BAC65669.1"/>
    <property type="status" value="ALT_INIT"/>
    <property type="molecule type" value="mRNA"/>
</dbReference>
<dbReference type="EMBL" id="AK031846">
    <property type="protein sequence ID" value="BAC27578.1"/>
    <property type="molecule type" value="mRNA"/>
</dbReference>
<dbReference type="EMBL" id="AK033892">
    <property type="protein sequence ID" value="BAC28505.1"/>
    <property type="molecule type" value="mRNA"/>
</dbReference>
<dbReference type="EMBL" id="AK044322">
    <property type="protein sequence ID" value="BAC31866.1"/>
    <property type="molecule type" value="mRNA"/>
</dbReference>
<dbReference type="EMBL" id="AK077316">
    <property type="protein sequence ID" value="BAC36745.1"/>
    <property type="molecule type" value="mRNA"/>
</dbReference>
<dbReference type="EMBL" id="BC080272">
    <property type="protein sequence ID" value="AAH80272.1"/>
    <property type="molecule type" value="mRNA"/>
</dbReference>
<dbReference type="CCDS" id="CCDS23903.1">
    <molecule id="Q8BG89-1"/>
</dbReference>
<dbReference type="RefSeq" id="NP_848794.1">
    <molecule id="Q8BG89-1"/>
    <property type="nucleotide sequence ID" value="NM_178679.2"/>
</dbReference>
<dbReference type="SMR" id="Q8BG89"/>
<dbReference type="FunCoup" id="Q8BG89">
    <property type="interactions" value="150"/>
</dbReference>
<dbReference type="IntAct" id="Q8BG89">
    <property type="interactions" value="2"/>
</dbReference>
<dbReference type="STRING" id="10090.ENSMUSP00000067197"/>
<dbReference type="iPTMnet" id="Q8BG89"/>
<dbReference type="PhosphoSitePlus" id="Q8BG89"/>
<dbReference type="PaxDb" id="10090-ENSMUSP00000067197"/>
<dbReference type="ProteomicsDB" id="275285">
    <molecule id="Q8BG89-1"/>
</dbReference>
<dbReference type="ProteomicsDB" id="275286">
    <molecule id="Q8BG89-2"/>
</dbReference>
<dbReference type="Antibodypedia" id="28272">
    <property type="antibodies" value="428 antibodies from 19 providers"/>
</dbReference>
<dbReference type="DNASU" id="216049"/>
<dbReference type="Ensembl" id="ENSMUST00000064656.8">
    <molecule id="Q8BG89-1"/>
    <property type="protein sequence ID" value="ENSMUSP00000067197.8"/>
    <property type="gene ID" value="ENSMUSG00000037855.16"/>
</dbReference>
<dbReference type="GeneID" id="216049"/>
<dbReference type="KEGG" id="mmu:216049"/>
<dbReference type="UCSC" id="uc007fmb.1">
    <molecule id="Q8BG89-1"/>
    <property type="organism name" value="mouse"/>
</dbReference>
<dbReference type="UCSC" id="uc007fmc.1">
    <molecule id="Q8BG89-2"/>
    <property type="organism name" value="mouse"/>
</dbReference>
<dbReference type="AGR" id="MGI:2143676"/>
<dbReference type="CTD" id="216049"/>
<dbReference type="MGI" id="MGI:2143676">
    <property type="gene designation" value="Zfp365"/>
</dbReference>
<dbReference type="VEuPathDB" id="HostDB:ENSMUSG00000037855"/>
<dbReference type="eggNOG" id="ENOG502QT88">
    <property type="taxonomic scope" value="Eukaryota"/>
</dbReference>
<dbReference type="GeneTree" id="ENSGT00530000063713"/>
<dbReference type="HOGENOM" id="CLU_049609_0_0_1"/>
<dbReference type="InParanoid" id="Q8BG89"/>
<dbReference type="OMA" id="CNHADLK"/>
<dbReference type="OrthoDB" id="271433at2759"/>
<dbReference type="PhylomeDB" id="Q8BG89"/>
<dbReference type="TreeFam" id="TF329439"/>
<dbReference type="BioGRID-ORCS" id="216049">
    <property type="hits" value="2 hits in 78 CRISPR screens"/>
</dbReference>
<dbReference type="CD-CODE" id="CE726F99">
    <property type="entry name" value="Postsynaptic density"/>
</dbReference>
<dbReference type="ChiTaRS" id="Zfp365">
    <property type="organism name" value="mouse"/>
</dbReference>
<dbReference type="PRO" id="PR:Q8BG89"/>
<dbReference type="Proteomes" id="UP000000589">
    <property type="component" value="Chromosome 10"/>
</dbReference>
<dbReference type="RNAct" id="Q8BG89">
    <property type="molecule type" value="protein"/>
</dbReference>
<dbReference type="Bgee" id="ENSMUSG00000037855">
    <property type="expression patterns" value="Expressed in retrosplenial region and 139 other cell types or tissues"/>
</dbReference>
<dbReference type="GO" id="GO:0005813">
    <property type="term" value="C:centrosome"/>
    <property type="evidence" value="ECO:0000266"/>
    <property type="project" value="MGI"/>
</dbReference>
<dbReference type="GO" id="GO:0005737">
    <property type="term" value="C:cytoplasm"/>
    <property type="evidence" value="ECO:0007669"/>
    <property type="project" value="UniProtKB-KW"/>
</dbReference>
<dbReference type="GO" id="GO:0042803">
    <property type="term" value="F:protein homodimerization activity"/>
    <property type="evidence" value="ECO:0000266"/>
    <property type="project" value="MGI"/>
</dbReference>
<dbReference type="GO" id="GO:0008270">
    <property type="term" value="F:zinc ion binding"/>
    <property type="evidence" value="ECO:0007669"/>
    <property type="project" value="UniProtKB-KW"/>
</dbReference>
<dbReference type="GO" id="GO:0021687">
    <property type="term" value="P:cerebellar molecular layer morphogenesis"/>
    <property type="evidence" value="ECO:0000315"/>
    <property type="project" value="UniProtKB"/>
</dbReference>
<dbReference type="GO" id="GO:0140059">
    <property type="term" value="P:dendrite arborization"/>
    <property type="evidence" value="ECO:0000315"/>
    <property type="project" value="UniProtKB"/>
</dbReference>
<dbReference type="GO" id="GO:0060997">
    <property type="term" value="P:dendritic spine morphogenesis"/>
    <property type="evidence" value="ECO:0000315"/>
    <property type="project" value="UniProtKB"/>
</dbReference>
<dbReference type="GO" id="GO:0033566">
    <property type="term" value="P:gamma-tubulin complex localization"/>
    <property type="evidence" value="ECO:0000266"/>
    <property type="project" value="MGI"/>
</dbReference>
<dbReference type="GO" id="GO:0000281">
    <property type="term" value="P:mitotic cytokinesis"/>
    <property type="evidence" value="ECO:0000266"/>
    <property type="project" value="MGI"/>
</dbReference>
<dbReference type="GO" id="GO:0010977">
    <property type="term" value="P:negative regulation of neuron projection development"/>
    <property type="evidence" value="ECO:0000250"/>
    <property type="project" value="UniProtKB"/>
</dbReference>
<dbReference type="GO" id="GO:0048714">
    <property type="term" value="P:positive regulation of oligodendrocyte differentiation"/>
    <property type="evidence" value="ECO:0000315"/>
    <property type="project" value="UniProtKB"/>
</dbReference>
<dbReference type="GO" id="GO:0110026">
    <property type="term" value="P:regulation of DNA strand resection involved in replication fork processing"/>
    <property type="evidence" value="ECO:0000250"/>
    <property type="project" value="UniProtKB"/>
</dbReference>
<dbReference type="GO" id="GO:0010569">
    <property type="term" value="P:regulation of double-strand break repair via homologous recombination"/>
    <property type="evidence" value="ECO:0000250"/>
    <property type="project" value="UniProtKB"/>
</dbReference>
<dbReference type="GO" id="GO:0000723">
    <property type="term" value="P:telomere maintenance"/>
    <property type="evidence" value="ECO:0000315"/>
    <property type="project" value="UniProtKB"/>
</dbReference>
<dbReference type="InterPro" id="IPR057038">
    <property type="entry name" value="FBX41/ZN365_Znf-C2H2"/>
</dbReference>
<dbReference type="InterPro" id="IPR052283">
    <property type="entry name" value="GenomicStab_NeuMorph_Reg"/>
</dbReference>
<dbReference type="PANTHER" id="PTHR15739:SF2">
    <property type="entry name" value="PROTEIN ZNF365"/>
    <property type="match status" value="1"/>
</dbReference>
<dbReference type="PANTHER" id="PTHR15739">
    <property type="entry name" value="ZINC FINGER PROTEIN"/>
    <property type="match status" value="1"/>
</dbReference>
<dbReference type="Pfam" id="PF23165">
    <property type="entry name" value="zf-C2H2_FBX41"/>
    <property type="match status" value="1"/>
</dbReference>
<accession>Q8BG89</accession>
<accession>Q80TQ4</accession>
<accession>Q8BK39</accession>
<accession>Q8BXT2</accession>
<comment type="function">
    <text evidence="2 7 8 10 11">Contributes to genomic stability by preventing telomere dysfunction (PubMed:23776040). Involved in the morphogenesis of basket cells in the somatosensory cortex during embryogenesis (PubMed:23912123). Involved in the positive regulation of oligodendrocyte differentiation during postnatal growth (PubMed:24481677). Involved in dendritic arborization, morphogenesis of spine density dendrite, and establishment of postsynaptic dendrite density in cortical pyramidal neurons (PubMed:25983680). Involved in the regulation of neurogenesis. Negatively regulates neurite outgrowth. Involved in homologous recombination (HR) repair pathway. Required for proper resolution of DNA double-strand breaks (DSBs) by HR. Is required for recovery of stalled replication forks, and directly contributes to genomic stability. Interacts with PARP1 and mediates MRE11-dependent DNA end resection during replication fork recovery (By similarity).</text>
</comment>
<comment type="subunit">
    <text evidence="2">Homodimer. Interacts with NDE1 and NDEL1 (By similarity). Interacts with DISC1. Interacts with PARP1 (By similarity). Interacts with MCRS1 (By similarity).</text>
</comment>
<comment type="subcellular location">
    <subcellularLocation>
        <location evidence="2">Cytoplasm</location>
        <location evidence="2">Cytoskeleton</location>
        <location evidence="2">Microtubule organizing center</location>
        <location evidence="2">Centrosome</location>
    </subcellularLocation>
</comment>
<comment type="alternative products">
    <event type="alternative splicing"/>
    <isoform>
        <id>Q8BG89-1</id>
        <name>1</name>
        <name>ZNF365a</name>
        <sequence type="displayed"/>
    </isoform>
    <isoform>
        <id>Q8BG89-2</id>
        <name>2</name>
        <sequence type="described" ref="VSP_016601 VSP_016602"/>
    </isoform>
</comment>
<comment type="tissue specificity">
    <text evidence="5 6 8">Detected in several tissues, with highest levels in brain. Also expressed during embryonic development. Expressed in cerebral cortex, hippocampus, striatum, inferior colliculus and thalamus (PubMed:23912123).</text>
</comment>
<comment type="developmental stage">
    <text evidence="8 10">In the embryo at day 14.5 post-coitum, expressed in the basal, medial and lateral ganglionic eminences of the cerebral cortex, but not in the caudal ganglionic eminence (PubMed:23912123). Expressed in the corpus callosum from postnatal day 7 (PD7) to PD56 with a peak at PD14 (PubMed:24481677).</text>
</comment>
<comment type="induction">
    <text evidence="9">Induced by gamma irradiation.</text>
</comment>
<comment type="disruption phenotype">
    <text evidence="8 10 11">Basket cells with reduced branches and short processes in the somatosensory cortex of adult knockout (KO) mice. Reduced expression of the gamma-aminobutyric acid-synthesizing enzymes Gad1 in the somatosensory cortex of KO mice (PubMed:23912123). Delayed myelination in the corpus callosum of KO mice during the postnatal period, but recovery by adulthood (PubMed:24481677). Decreased dendritic arborization and increased spine density dendrites in cortical pyramidal neurons of adult KO mice (PubMed:25983680).</text>
</comment>
<comment type="sequence caution" evidence="14">
    <conflict type="erroneous initiation">
        <sequence resource="EMBL-CDS" id="BAC65669"/>
    </conflict>
    <text>Extended N-terminus.</text>
</comment>
<proteinExistence type="evidence at protein level"/>
<keyword id="KW-0025">Alternative splicing</keyword>
<keyword id="KW-0175">Coiled coil</keyword>
<keyword id="KW-0963">Cytoplasm</keyword>
<keyword id="KW-0206">Cytoskeleton</keyword>
<keyword id="KW-0479">Metal-binding</keyword>
<keyword id="KW-0524">Neurogenesis</keyword>
<keyword id="KW-0597">Phosphoprotein</keyword>
<keyword id="KW-1185">Reference proteome</keyword>
<keyword id="KW-0862">Zinc</keyword>
<keyword id="KW-0863">Zinc-finger</keyword>